<accession>B2G5C0</accession>
<proteinExistence type="inferred from homology"/>
<feature type="chain" id="PRO_1000193030" description="Phosphoribosylformylglycinamidine cyclo-ligase">
    <location>
        <begin position="1"/>
        <end position="345"/>
    </location>
</feature>
<keyword id="KW-0067">ATP-binding</keyword>
<keyword id="KW-0963">Cytoplasm</keyword>
<keyword id="KW-0436">Ligase</keyword>
<keyword id="KW-0547">Nucleotide-binding</keyword>
<keyword id="KW-0658">Purine biosynthesis</keyword>
<organism>
    <name type="scientific">Limosilactobacillus reuteri subsp. reuteri (strain JCM 1112)</name>
    <name type="common">Lactobacillus reuteri</name>
    <dbReference type="NCBI Taxonomy" id="557433"/>
    <lineage>
        <taxon>Bacteria</taxon>
        <taxon>Bacillati</taxon>
        <taxon>Bacillota</taxon>
        <taxon>Bacilli</taxon>
        <taxon>Lactobacillales</taxon>
        <taxon>Lactobacillaceae</taxon>
        <taxon>Limosilactobacillus</taxon>
    </lineage>
</organism>
<sequence length="345" mass="36976">MSRYQDAGVDVNAGYELVHRIKDAVKSTDRPGVIGGIGSFGGMFDLEKLQVQHPILVSGTDGVGTKLLIAQQMNKHDTIGIDVVAMCVNDVLAQGAEPITFLDYIATGHNDPAKMAAIVSGVATGCREAGAALIGGETAEMPDMYAANEYDLAGTVTGIAEKEELLTTAGPQKGDILLGLPSSGLHSNGFSLVRQILFKDNHVKLTDRPEALRGKTVGETILTPTRIYVQAVLPLVHRKLVHGISHITGGGLIENVPRMLGDNLQAVIDPGRWPQLPVFDYLRVLGGLTKEDCFEAFNMGIGMVLAVAPDQVAQVQEILSNKNMTSYQIGYLRHCLPDTKKIVIK</sequence>
<dbReference type="EC" id="6.3.3.1" evidence="1"/>
<dbReference type="EMBL" id="AP007281">
    <property type="protein sequence ID" value="BAG24652.1"/>
    <property type="molecule type" value="Genomic_DNA"/>
</dbReference>
<dbReference type="RefSeq" id="WP_003669727.1">
    <property type="nucleotide sequence ID" value="NC_010609.1"/>
</dbReference>
<dbReference type="SMR" id="B2G5C0"/>
<dbReference type="KEGG" id="lrf:LAR_0136"/>
<dbReference type="HOGENOM" id="CLU_047116_0_0_9"/>
<dbReference type="UniPathway" id="UPA00074">
    <property type="reaction ID" value="UER00129"/>
</dbReference>
<dbReference type="GO" id="GO:0005829">
    <property type="term" value="C:cytosol"/>
    <property type="evidence" value="ECO:0007669"/>
    <property type="project" value="TreeGrafter"/>
</dbReference>
<dbReference type="GO" id="GO:0005524">
    <property type="term" value="F:ATP binding"/>
    <property type="evidence" value="ECO:0007669"/>
    <property type="project" value="UniProtKB-KW"/>
</dbReference>
<dbReference type="GO" id="GO:0004637">
    <property type="term" value="F:phosphoribosylamine-glycine ligase activity"/>
    <property type="evidence" value="ECO:0007669"/>
    <property type="project" value="TreeGrafter"/>
</dbReference>
<dbReference type="GO" id="GO:0004641">
    <property type="term" value="F:phosphoribosylformylglycinamidine cyclo-ligase activity"/>
    <property type="evidence" value="ECO:0007669"/>
    <property type="project" value="UniProtKB-UniRule"/>
</dbReference>
<dbReference type="GO" id="GO:0006189">
    <property type="term" value="P:'de novo' IMP biosynthetic process"/>
    <property type="evidence" value="ECO:0007669"/>
    <property type="project" value="UniProtKB-UniRule"/>
</dbReference>
<dbReference type="GO" id="GO:0046084">
    <property type="term" value="P:adenine biosynthetic process"/>
    <property type="evidence" value="ECO:0007669"/>
    <property type="project" value="TreeGrafter"/>
</dbReference>
<dbReference type="CDD" id="cd02196">
    <property type="entry name" value="PurM"/>
    <property type="match status" value="1"/>
</dbReference>
<dbReference type="FunFam" id="3.30.1330.10:FF:000001">
    <property type="entry name" value="Phosphoribosylformylglycinamidine cyclo-ligase"/>
    <property type="match status" value="1"/>
</dbReference>
<dbReference type="FunFam" id="3.90.650.10:FF:000011">
    <property type="entry name" value="Phosphoribosylformylglycinamidine cyclo-ligase"/>
    <property type="match status" value="1"/>
</dbReference>
<dbReference type="Gene3D" id="3.90.650.10">
    <property type="entry name" value="PurM-like C-terminal domain"/>
    <property type="match status" value="1"/>
</dbReference>
<dbReference type="Gene3D" id="3.30.1330.10">
    <property type="entry name" value="PurM-like, N-terminal domain"/>
    <property type="match status" value="1"/>
</dbReference>
<dbReference type="HAMAP" id="MF_00741">
    <property type="entry name" value="AIRS"/>
    <property type="match status" value="1"/>
</dbReference>
<dbReference type="InterPro" id="IPR010918">
    <property type="entry name" value="PurM-like_C_dom"/>
</dbReference>
<dbReference type="InterPro" id="IPR036676">
    <property type="entry name" value="PurM-like_C_sf"/>
</dbReference>
<dbReference type="InterPro" id="IPR016188">
    <property type="entry name" value="PurM-like_N"/>
</dbReference>
<dbReference type="InterPro" id="IPR036921">
    <property type="entry name" value="PurM-like_N_sf"/>
</dbReference>
<dbReference type="InterPro" id="IPR004733">
    <property type="entry name" value="PurM_cligase"/>
</dbReference>
<dbReference type="NCBIfam" id="TIGR00878">
    <property type="entry name" value="purM"/>
    <property type="match status" value="1"/>
</dbReference>
<dbReference type="PANTHER" id="PTHR10520:SF12">
    <property type="entry name" value="TRIFUNCTIONAL PURINE BIOSYNTHETIC PROTEIN ADENOSINE-3"/>
    <property type="match status" value="1"/>
</dbReference>
<dbReference type="PANTHER" id="PTHR10520">
    <property type="entry name" value="TRIFUNCTIONAL PURINE BIOSYNTHETIC PROTEIN ADENOSINE-3-RELATED"/>
    <property type="match status" value="1"/>
</dbReference>
<dbReference type="Pfam" id="PF00586">
    <property type="entry name" value="AIRS"/>
    <property type="match status" value="1"/>
</dbReference>
<dbReference type="Pfam" id="PF02769">
    <property type="entry name" value="AIRS_C"/>
    <property type="match status" value="1"/>
</dbReference>
<dbReference type="SUPFAM" id="SSF56042">
    <property type="entry name" value="PurM C-terminal domain-like"/>
    <property type="match status" value="1"/>
</dbReference>
<dbReference type="SUPFAM" id="SSF55326">
    <property type="entry name" value="PurM N-terminal domain-like"/>
    <property type="match status" value="1"/>
</dbReference>
<gene>
    <name evidence="1" type="primary">purM</name>
    <name type="ordered locus">LAR_0136</name>
</gene>
<comment type="catalytic activity">
    <reaction evidence="1">
        <text>2-formamido-N(1)-(5-O-phospho-beta-D-ribosyl)acetamidine + ATP = 5-amino-1-(5-phospho-beta-D-ribosyl)imidazole + ADP + phosphate + H(+)</text>
        <dbReference type="Rhea" id="RHEA:23032"/>
        <dbReference type="ChEBI" id="CHEBI:15378"/>
        <dbReference type="ChEBI" id="CHEBI:30616"/>
        <dbReference type="ChEBI" id="CHEBI:43474"/>
        <dbReference type="ChEBI" id="CHEBI:137981"/>
        <dbReference type="ChEBI" id="CHEBI:147287"/>
        <dbReference type="ChEBI" id="CHEBI:456216"/>
        <dbReference type="EC" id="6.3.3.1"/>
    </reaction>
</comment>
<comment type="pathway">
    <text evidence="1">Purine metabolism; IMP biosynthesis via de novo pathway; 5-amino-1-(5-phospho-D-ribosyl)imidazole from N(2)-formyl-N(1)-(5-phospho-D-ribosyl)glycinamide: step 2/2.</text>
</comment>
<comment type="subcellular location">
    <subcellularLocation>
        <location evidence="1">Cytoplasm</location>
    </subcellularLocation>
</comment>
<comment type="similarity">
    <text evidence="1">Belongs to the AIR synthase family.</text>
</comment>
<name>PUR5_LIMRJ</name>
<evidence type="ECO:0000255" key="1">
    <source>
        <dbReference type="HAMAP-Rule" id="MF_00741"/>
    </source>
</evidence>
<reference key="1">
    <citation type="journal article" date="2008" name="DNA Res.">
        <title>Comparative genome analysis of Lactobacillus reuteri and Lactobacillus fermentum reveal a genomic island for reuterin and cobalamin production.</title>
        <authorList>
            <person name="Morita H."/>
            <person name="Toh H."/>
            <person name="Fukuda S."/>
            <person name="Horikawa H."/>
            <person name="Oshima K."/>
            <person name="Suzuki T."/>
            <person name="Murakami M."/>
            <person name="Hisamatsu S."/>
            <person name="Kato Y."/>
            <person name="Takizawa T."/>
            <person name="Fukuoka H."/>
            <person name="Yoshimura T."/>
            <person name="Itoh K."/>
            <person name="O'Sullivan D.J."/>
            <person name="McKay L.L."/>
            <person name="Ohno H."/>
            <person name="Kikuchi J."/>
            <person name="Masaoka T."/>
            <person name="Hattori M."/>
        </authorList>
    </citation>
    <scope>NUCLEOTIDE SEQUENCE [LARGE SCALE GENOMIC DNA]</scope>
    <source>
        <strain>JCM 1112</strain>
    </source>
</reference>
<protein>
    <recommendedName>
        <fullName evidence="1">Phosphoribosylformylglycinamidine cyclo-ligase</fullName>
        <ecNumber evidence="1">6.3.3.1</ecNumber>
    </recommendedName>
    <alternativeName>
        <fullName evidence="1">AIR synthase</fullName>
    </alternativeName>
    <alternativeName>
        <fullName evidence="1">AIRS</fullName>
    </alternativeName>
    <alternativeName>
        <fullName evidence="1">Phosphoribosyl-aminoimidazole synthetase</fullName>
    </alternativeName>
</protein>